<keyword id="KW-0997">Cell inner membrane</keyword>
<keyword id="KW-1003">Cell membrane</keyword>
<keyword id="KW-0472">Membrane</keyword>
<keyword id="KW-0520">NAD</keyword>
<keyword id="KW-0874">Quinone</keyword>
<keyword id="KW-1278">Translocase</keyword>
<keyword id="KW-0812">Transmembrane</keyword>
<keyword id="KW-1133">Transmembrane helix</keyword>
<keyword id="KW-0813">Transport</keyword>
<keyword id="KW-0830">Ubiquinone</keyword>
<accession>B0KMY7</accession>
<reference key="1">
    <citation type="submission" date="2008-01" db="EMBL/GenBank/DDBJ databases">
        <title>Complete sequence of Pseudomonas putida GB-1.</title>
        <authorList>
            <consortium name="US DOE Joint Genome Institute"/>
            <person name="Copeland A."/>
            <person name="Lucas S."/>
            <person name="Lapidus A."/>
            <person name="Barry K."/>
            <person name="Glavina del Rio T."/>
            <person name="Dalin E."/>
            <person name="Tice H."/>
            <person name="Pitluck S."/>
            <person name="Bruce D."/>
            <person name="Goodwin L."/>
            <person name="Chertkov O."/>
            <person name="Brettin T."/>
            <person name="Detter J.C."/>
            <person name="Han C."/>
            <person name="Kuske C.R."/>
            <person name="Schmutz J."/>
            <person name="Larimer F."/>
            <person name="Land M."/>
            <person name="Hauser L."/>
            <person name="Kyrpides N."/>
            <person name="Kim E."/>
            <person name="McCarthy J.K."/>
            <person name="Richardson P."/>
        </authorList>
    </citation>
    <scope>NUCLEOTIDE SEQUENCE [LARGE SCALE GENOMIC DNA]</scope>
    <source>
        <strain>GB-1</strain>
    </source>
</reference>
<evidence type="ECO:0000255" key="1">
    <source>
        <dbReference type="HAMAP-Rule" id="MF_01456"/>
    </source>
</evidence>
<gene>
    <name evidence="1" type="primary">nuoK</name>
    <name type="ordered locus">PputGB1_3700</name>
</gene>
<proteinExistence type="inferred from homology"/>
<protein>
    <recommendedName>
        <fullName evidence="1">NADH-quinone oxidoreductase subunit K</fullName>
        <ecNumber evidence="1">7.1.1.-</ecNumber>
    </recommendedName>
    <alternativeName>
        <fullName evidence="1">NADH dehydrogenase I subunit K</fullName>
    </alternativeName>
    <alternativeName>
        <fullName evidence="1">NDH-1 subunit K</fullName>
    </alternativeName>
</protein>
<comment type="function">
    <text evidence="1">NDH-1 shuttles electrons from NADH, via FMN and iron-sulfur (Fe-S) centers, to quinones in the respiratory chain. The immediate electron acceptor for the enzyme in this species is believed to be ubiquinone. Couples the redox reaction to proton translocation (for every two electrons transferred, four hydrogen ions are translocated across the cytoplasmic membrane), and thus conserves the redox energy in a proton gradient.</text>
</comment>
<comment type="catalytic activity">
    <reaction evidence="1">
        <text>a quinone + NADH + 5 H(+)(in) = a quinol + NAD(+) + 4 H(+)(out)</text>
        <dbReference type="Rhea" id="RHEA:57888"/>
        <dbReference type="ChEBI" id="CHEBI:15378"/>
        <dbReference type="ChEBI" id="CHEBI:24646"/>
        <dbReference type="ChEBI" id="CHEBI:57540"/>
        <dbReference type="ChEBI" id="CHEBI:57945"/>
        <dbReference type="ChEBI" id="CHEBI:132124"/>
    </reaction>
</comment>
<comment type="subunit">
    <text evidence="1">NDH-1 is composed of 13 different subunits. Subunits NuoA, H, J, K, L, M, N constitute the membrane sector of the complex.</text>
</comment>
<comment type="subcellular location">
    <subcellularLocation>
        <location evidence="1">Cell inner membrane</location>
        <topology evidence="1">Multi-pass membrane protein</topology>
    </subcellularLocation>
</comment>
<comment type="similarity">
    <text evidence="1">Belongs to the complex I subunit 4L family.</text>
</comment>
<organism>
    <name type="scientific">Pseudomonas putida (strain GB-1)</name>
    <dbReference type="NCBI Taxonomy" id="76869"/>
    <lineage>
        <taxon>Bacteria</taxon>
        <taxon>Pseudomonadati</taxon>
        <taxon>Pseudomonadota</taxon>
        <taxon>Gammaproteobacteria</taxon>
        <taxon>Pseudomonadales</taxon>
        <taxon>Pseudomonadaceae</taxon>
        <taxon>Pseudomonas</taxon>
    </lineage>
</organism>
<sequence length="102" mass="10941">MGAIPLEHGLAVAGILFCLGLVGLMVRRNILFVLMSLEVMMNASALAFVVAGARWVQPDGQVMFILVISLAAAEASIGLAILLQLYRRFHTLDIDAASEMRG</sequence>
<feature type="chain" id="PRO_0000390172" description="NADH-quinone oxidoreductase subunit K">
    <location>
        <begin position="1"/>
        <end position="102"/>
    </location>
</feature>
<feature type="transmembrane region" description="Helical" evidence="1">
    <location>
        <begin position="6"/>
        <end position="26"/>
    </location>
</feature>
<feature type="transmembrane region" description="Helical" evidence="1">
    <location>
        <begin position="30"/>
        <end position="50"/>
    </location>
</feature>
<feature type="transmembrane region" description="Helical" evidence="1">
    <location>
        <begin position="62"/>
        <end position="82"/>
    </location>
</feature>
<dbReference type="EC" id="7.1.1.-" evidence="1"/>
<dbReference type="EMBL" id="CP000926">
    <property type="protein sequence ID" value="ABY99591.1"/>
    <property type="molecule type" value="Genomic_DNA"/>
</dbReference>
<dbReference type="RefSeq" id="WP_003251446.1">
    <property type="nucleotide sequence ID" value="NC_010322.1"/>
</dbReference>
<dbReference type="SMR" id="B0KMY7"/>
<dbReference type="GeneID" id="97169079"/>
<dbReference type="KEGG" id="ppg:PputGB1_3700"/>
<dbReference type="eggNOG" id="COG0713">
    <property type="taxonomic scope" value="Bacteria"/>
</dbReference>
<dbReference type="HOGENOM" id="CLU_144724_0_1_6"/>
<dbReference type="Proteomes" id="UP000002157">
    <property type="component" value="Chromosome"/>
</dbReference>
<dbReference type="GO" id="GO:0030964">
    <property type="term" value="C:NADH dehydrogenase complex"/>
    <property type="evidence" value="ECO:0007669"/>
    <property type="project" value="TreeGrafter"/>
</dbReference>
<dbReference type="GO" id="GO:0005886">
    <property type="term" value="C:plasma membrane"/>
    <property type="evidence" value="ECO:0007669"/>
    <property type="project" value="UniProtKB-SubCell"/>
</dbReference>
<dbReference type="GO" id="GO:0050136">
    <property type="term" value="F:NADH:ubiquinone reductase (non-electrogenic) activity"/>
    <property type="evidence" value="ECO:0007669"/>
    <property type="project" value="UniProtKB-UniRule"/>
</dbReference>
<dbReference type="GO" id="GO:0048038">
    <property type="term" value="F:quinone binding"/>
    <property type="evidence" value="ECO:0007669"/>
    <property type="project" value="UniProtKB-KW"/>
</dbReference>
<dbReference type="GO" id="GO:0042773">
    <property type="term" value="P:ATP synthesis coupled electron transport"/>
    <property type="evidence" value="ECO:0007669"/>
    <property type="project" value="InterPro"/>
</dbReference>
<dbReference type="FunFam" id="1.10.287.3510:FF:000001">
    <property type="entry name" value="NADH-quinone oxidoreductase subunit K"/>
    <property type="match status" value="1"/>
</dbReference>
<dbReference type="Gene3D" id="1.10.287.3510">
    <property type="match status" value="1"/>
</dbReference>
<dbReference type="HAMAP" id="MF_01456">
    <property type="entry name" value="NDH1_NuoK"/>
    <property type="match status" value="1"/>
</dbReference>
<dbReference type="InterPro" id="IPR001133">
    <property type="entry name" value="NADH_UbQ_OxRdtase_chain4L/K"/>
</dbReference>
<dbReference type="InterPro" id="IPR039428">
    <property type="entry name" value="NUOK/Mnh_C1-like"/>
</dbReference>
<dbReference type="NCBIfam" id="NF004319">
    <property type="entry name" value="PRK05715.1-1"/>
    <property type="match status" value="1"/>
</dbReference>
<dbReference type="NCBIfam" id="NF004320">
    <property type="entry name" value="PRK05715.1-2"/>
    <property type="match status" value="1"/>
</dbReference>
<dbReference type="PANTHER" id="PTHR11434:SF16">
    <property type="entry name" value="NADH-UBIQUINONE OXIDOREDUCTASE CHAIN 4L"/>
    <property type="match status" value="1"/>
</dbReference>
<dbReference type="PANTHER" id="PTHR11434">
    <property type="entry name" value="NADH-UBIQUINONE OXIDOREDUCTASE SUBUNIT ND4L"/>
    <property type="match status" value="1"/>
</dbReference>
<dbReference type="Pfam" id="PF00420">
    <property type="entry name" value="Oxidored_q2"/>
    <property type="match status" value="1"/>
</dbReference>
<name>NUOK_PSEPG</name>